<dbReference type="EMBL" id="AC005917">
    <property type="protein sequence ID" value="AAD10153.1"/>
    <property type="molecule type" value="Genomic_DNA"/>
</dbReference>
<dbReference type="EMBL" id="CP002685">
    <property type="protein sequence ID" value="AEC06893.1"/>
    <property type="molecule type" value="Genomic_DNA"/>
</dbReference>
<dbReference type="EMBL" id="AF370506">
    <property type="protein sequence ID" value="AAK43883.1"/>
    <property type="molecule type" value="mRNA"/>
</dbReference>
<dbReference type="EMBL" id="AY128814">
    <property type="protein sequence ID" value="AAM91214.1"/>
    <property type="molecule type" value="mRNA"/>
</dbReference>
<dbReference type="PIR" id="A84578">
    <property type="entry name" value="A84578"/>
</dbReference>
<dbReference type="RefSeq" id="NP_179544.1">
    <property type="nucleotide sequence ID" value="NM_127512.4"/>
</dbReference>
<dbReference type="SMR" id="Q9ZUN8"/>
<dbReference type="FunCoup" id="Q9ZUN8">
    <property type="interactions" value="3835"/>
</dbReference>
<dbReference type="STRING" id="3702.Q9ZUN8"/>
<dbReference type="iPTMnet" id="Q9ZUN8"/>
<dbReference type="PaxDb" id="3702-AT2G19540.1"/>
<dbReference type="ProteomicsDB" id="191697"/>
<dbReference type="EnsemblPlants" id="AT2G19540.1">
    <property type="protein sequence ID" value="AT2G19540.1"/>
    <property type="gene ID" value="AT2G19540"/>
</dbReference>
<dbReference type="GeneID" id="816473"/>
<dbReference type="Gramene" id="AT2G19540.1">
    <property type="protein sequence ID" value="AT2G19540.1"/>
    <property type="gene ID" value="AT2G19540"/>
</dbReference>
<dbReference type="KEGG" id="ath:AT2G19540"/>
<dbReference type="Araport" id="AT2G19540"/>
<dbReference type="TAIR" id="AT2G19540">
    <property type="gene designation" value="HTD1"/>
</dbReference>
<dbReference type="eggNOG" id="KOG0302">
    <property type="taxonomic scope" value="Eukaryota"/>
</dbReference>
<dbReference type="HOGENOM" id="CLU_025272_2_1_1"/>
<dbReference type="InParanoid" id="Q9ZUN8"/>
<dbReference type="OMA" id="RHWKPNA"/>
<dbReference type="PhylomeDB" id="Q9ZUN8"/>
<dbReference type="UniPathway" id="UPA00143"/>
<dbReference type="CD-CODE" id="4299E36E">
    <property type="entry name" value="Nucleolus"/>
</dbReference>
<dbReference type="PRO" id="PR:Q9ZUN8"/>
<dbReference type="Proteomes" id="UP000006548">
    <property type="component" value="Chromosome 2"/>
</dbReference>
<dbReference type="ExpressionAtlas" id="Q9ZUN8">
    <property type="expression patterns" value="baseline and differential"/>
</dbReference>
<dbReference type="GO" id="GO:0080008">
    <property type="term" value="C:Cul4-RING E3 ubiquitin ligase complex"/>
    <property type="evidence" value="ECO:0000250"/>
    <property type="project" value="TAIR"/>
</dbReference>
<dbReference type="GO" id="GO:1900035">
    <property type="term" value="P:negative regulation of cellular response to heat"/>
    <property type="evidence" value="ECO:0000315"/>
    <property type="project" value="UniProtKB"/>
</dbReference>
<dbReference type="GO" id="GO:0016567">
    <property type="term" value="P:protein ubiquitination"/>
    <property type="evidence" value="ECO:0007669"/>
    <property type="project" value="UniProtKB-UniPathway"/>
</dbReference>
<dbReference type="GO" id="GO:0009408">
    <property type="term" value="P:response to heat"/>
    <property type="evidence" value="ECO:0000270"/>
    <property type="project" value="UniProtKB"/>
</dbReference>
<dbReference type="FunFam" id="2.130.10.10:FF:002269">
    <property type="entry name" value="Putative WD-40 repeat protein"/>
    <property type="match status" value="1"/>
</dbReference>
<dbReference type="Gene3D" id="2.130.10.10">
    <property type="entry name" value="YVTN repeat-like/Quinoprotein amine dehydrogenase"/>
    <property type="match status" value="1"/>
</dbReference>
<dbReference type="InterPro" id="IPR051972">
    <property type="entry name" value="Glutamate-rich_WD_repeat"/>
</dbReference>
<dbReference type="InterPro" id="IPR022052">
    <property type="entry name" value="Histone-bd_RBBP4-like_N"/>
</dbReference>
<dbReference type="InterPro" id="IPR015943">
    <property type="entry name" value="WD40/YVTN_repeat-like_dom_sf"/>
</dbReference>
<dbReference type="InterPro" id="IPR036322">
    <property type="entry name" value="WD40_repeat_dom_sf"/>
</dbReference>
<dbReference type="InterPro" id="IPR001680">
    <property type="entry name" value="WD40_rpt"/>
</dbReference>
<dbReference type="PANTHER" id="PTHR45903">
    <property type="entry name" value="GLUTAMATE-RICH WD REPEAT-CONTAINING PROTEIN 1"/>
    <property type="match status" value="1"/>
</dbReference>
<dbReference type="PANTHER" id="PTHR45903:SF1">
    <property type="entry name" value="GLUTAMATE-RICH WD REPEAT-CONTAINING PROTEIN 1"/>
    <property type="match status" value="1"/>
</dbReference>
<dbReference type="Pfam" id="PF12265">
    <property type="entry name" value="CAF1C_H4-bd"/>
    <property type="match status" value="1"/>
</dbReference>
<dbReference type="Pfam" id="PF00400">
    <property type="entry name" value="WD40"/>
    <property type="match status" value="3"/>
</dbReference>
<dbReference type="SMART" id="SM00320">
    <property type="entry name" value="WD40"/>
    <property type="match status" value="5"/>
</dbReference>
<dbReference type="SUPFAM" id="SSF50978">
    <property type="entry name" value="WD40 repeat-like"/>
    <property type="match status" value="1"/>
</dbReference>
<dbReference type="PROSITE" id="PS50082">
    <property type="entry name" value="WD_REPEATS_2"/>
    <property type="match status" value="2"/>
</dbReference>
<dbReference type="PROSITE" id="PS50294">
    <property type="entry name" value="WD_REPEATS_REGION"/>
    <property type="match status" value="1"/>
</dbReference>
<name>HTD1_ARATH</name>
<protein>
    <recommendedName>
        <fullName evidence="4">Protein HEAT STRESS TOLERANT DWD 1</fullName>
    </recommendedName>
</protein>
<sequence>MGRNVKTKAKRKNKKKAEASSSEIPSIPTRVWQPGVDTLEDGEELQCDPSAYNSLHGFHVGWPCLSFDILGDKLGLNRTEFPHTLYMVAGTQAEKAAHNSIGLFKITNVSGKRRDVVPKTFGNGEDEDEDDEDDSDSDDDDGDEASKTPNIQVRRVAHHGCVNRIRAMPQNSHICVSWADSGHVQVWDMSSHLNALAESETEGKDGTSPVLNQAPLVNFSGHKDEGYAIDWSPATAGRLLSGDCKSMIHLWEPASGSWAVDPIPFAGHTASVEDLQWSPAEENVFASCSVDGSVAVWDIRLGKSPALSFKAHNADVNVISWNRLASCMLASGSDDGTFSIRDLRLIKGGDAVVAHFEYHKHPITSIEWSAHEASTLAVTSGDNQLTIWDLSLEKDEEEEAEFNAQTKELVNTPQDLPPQLLFVHQGQKDLKELHWHNQIPGMIISTAGDGFNILMPYNIQNTLPSELPA</sequence>
<proteinExistence type="evidence at protein level"/>
<accession>Q9ZUN8</accession>
<organism>
    <name type="scientific">Arabidopsis thaliana</name>
    <name type="common">Mouse-ear cress</name>
    <dbReference type="NCBI Taxonomy" id="3702"/>
    <lineage>
        <taxon>Eukaryota</taxon>
        <taxon>Viridiplantae</taxon>
        <taxon>Streptophyta</taxon>
        <taxon>Embryophyta</taxon>
        <taxon>Tracheophyta</taxon>
        <taxon>Spermatophyta</taxon>
        <taxon>Magnoliopsida</taxon>
        <taxon>eudicotyledons</taxon>
        <taxon>Gunneridae</taxon>
        <taxon>Pentapetalae</taxon>
        <taxon>rosids</taxon>
        <taxon>malvids</taxon>
        <taxon>Brassicales</taxon>
        <taxon>Brassicaceae</taxon>
        <taxon>Camelineae</taxon>
        <taxon>Arabidopsis</taxon>
    </lineage>
</organism>
<keyword id="KW-1185">Reference proteome</keyword>
<keyword id="KW-0677">Repeat</keyword>
<keyword id="KW-0346">Stress response</keyword>
<keyword id="KW-0833">Ubl conjugation pathway</keyword>
<keyword id="KW-0853">WD repeat</keyword>
<comment type="function">
    <text evidence="3">Probable substrate receptor of CRL4 E3 ligase complexes acting as negative regulators of thermotolerance by disturbing the action of HSP90-1 and by preventing the expression of heat-inducible genes (e.g. HSP14.7, HSP21, At2g03020 and WRKY28).</text>
</comment>
<comment type="pathway">
    <text evidence="6">Protein modification; protein ubiquitination.</text>
</comment>
<comment type="subunit">
    <text evidence="3">Probable component of CULLIN4 (CUL4) RING ligase (CRL4) complexes (PubMed:25358503). Interacts with DDB1A and DDB1B (PubMed:25358503). Associates with HSP90-1 (PubMed:25358503).</text>
</comment>
<comment type="induction">
    <text evidence="3">Accumulates in response to heat stress.</text>
</comment>
<comment type="disruption phenotype">
    <text evidence="3">Increased heat stress tolerance associated with the accumulation of HSP14.7, HSP21, At2g03020 and WRKY28.</text>
</comment>
<comment type="similarity">
    <text evidence="5">Belongs to the WD repeat RBAP46/RBAP48/MSI1 family.</text>
</comment>
<feature type="chain" id="PRO_0000452651" description="Protein HEAT STRESS TOLERANT DWD 1">
    <location>
        <begin position="1"/>
        <end position="469"/>
    </location>
</feature>
<feature type="repeat" description="WD 1" evidence="1">
    <location>
        <begin position="157"/>
        <end position="197"/>
    </location>
</feature>
<feature type="repeat" description="WD 2" evidence="1">
    <location>
        <begin position="221"/>
        <end position="261"/>
    </location>
</feature>
<feature type="repeat" description="WD 3" evidence="1">
    <location>
        <begin position="267"/>
        <end position="307"/>
    </location>
</feature>
<feature type="repeat" description="WD 4" evidence="1">
    <location>
        <begin position="311"/>
        <end position="351"/>
    </location>
</feature>
<feature type="repeat" description="WD 5" evidence="1">
    <location>
        <begin position="358"/>
        <end position="398"/>
    </location>
</feature>
<feature type="repeat" description="WD 6" evidence="1">
    <location>
        <begin position="425"/>
        <end position="464"/>
    </location>
</feature>
<feature type="region of interest" description="Disordered" evidence="2">
    <location>
        <begin position="1"/>
        <end position="29"/>
    </location>
</feature>
<feature type="region of interest" description="Disordered" evidence="2">
    <location>
        <begin position="115"/>
        <end position="150"/>
    </location>
</feature>
<feature type="compositionally biased region" description="Basic residues" evidence="2">
    <location>
        <begin position="1"/>
        <end position="15"/>
    </location>
</feature>
<feature type="compositionally biased region" description="Acidic residues" evidence="2">
    <location>
        <begin position="124"/>
        <end position="143"/>
    </location>
</feature>
<evidence type="ECO:0000255" key="1"/>
<evidence type="ECO:0000256" key="2">
    <source>
        <dbReference type="SAM" id="MobiDB-lite"/>
    </source>
</evidence>
<evidence type="ECO:0000269" key="3">
    <source>
    </source>
</evidence>
<evidence type="ECO:0000303" key="4">
    <source>
    </source>
</evidence>
<evidence type="ECO:0000305" key="5"/>
<evidence type="ECO:0000305" key="6">
    <source>
    </source>
</evidence>
<evidence type="ECO:0000312" key="7">
    <source>
        <dbReference type="Araport" id="AT2G19540"/>
    </source>
</evidence>
<evidence type="ECO:0000312" key="8">
    <source>
        <dbReference type="EMBL" id="AAD10153.1"/>
    </source>
</evidence>
<reference key="1">
    <citation type="journal article" date="1999" name="Nature">
        <title>Sequence and analysis of chromosome 2 of the plant Arabidopsis thaliana.</title>
        <authorList>
            <person name="Lin X."/>
            <person name="Kaul S."/>
            <person name="Rounsley S.D."/>
            <person name="Shea T.P."/>
            <person name="Benito M.-I."/>
            <person name="Town C.D."/>
            <person name="Fujii C.Y."/>
            <person name="Mason T.M."/>
            <person name="Bowman C.L."/>
            <person name="Barnstead M.E."/>
            <person name="Feldblyum T.V."/>
            <person name="Buell C.R."/>
            <person name="Ketchum K.A."/>
            <person name="Lee J.J."/>
            <person name="Ronning C.M."/>
            <person name="Koo H.L."/>
            <person name="Moffat K.S."/>
            <person name="Cronin L.A."/>
            <person name="Shen M."/>
            <person name="Pai G."/>
            <person name="Van Aken S."/>
            <person name="Umayam L."/>
            <person name="Tallon L.J."/>
            <person name="Gill J.E."/>
            <person name="Adams M.D."/>
            <person name="Carrera A.J."/>
            <person name="Creasy T.H."/>
            <person name="Goodman H.M."/>
            <person name="Somerville C.R."/>
            <person name="Copenhaver G.P."/>
            <person name="Preuss D."/>
            <person name="Nierman W.C."/>
            <person name="White O."/>
            <person name="Eisen J.A."/>
            <person name="Salzberg S.L."/>
            <person name="Fraser C.M."/>
            <person name="Venter J.C."/>
        </authorList>
    </citation>
    <scope>NUCLEOTIDE SEQUENCE [LARGE SCALE GENOMIC DNA]</scope>
    <source>
        <strain>cv. Columbia</strain>
    </source>
</reference>
<reference key="2">
    <citation type="journal article" date="2017" name="Plant J.">
        <title>Araport11: a complete reannotation of the Arabidopsis thaliana reference genome.</title>
        <authorList>
            <person name="Cheng C.Y."/>
            <person name="Krishnakumar V."/>
            <person name="Chan A.P."/>
            <person name="Thibaud-Nissen F."/>
            <person name="Schobel S."/>
            <person name="Town C.D."/>
        </authorList>
    </citation>
    <scope>GENOME REANNOTATION</scope>
    <source>
        <strain>cv. Columbia</strain>
    </source>
</reference>
<reference key="3">
    <citation type="journal article" date="2003" name="Science">
        <title>Empirical analysis of transcriptional activity in the Arabidopsis genome.</title>
        <authorList>
            <person name="Yamada K."/>
            <person name="Lim J."/>
            <person name="Dale J.M."/>
            <person name="Chen H."/>
            <person name="Shinn P."/>
            <person name="Palm C.J."/>
            <person name="Southwick A.M."/>
            <person name="Wu H.C."/>
            <person name="Kim C.J."/>
            <person name="Nguyen M."/>
            <person name="Pham P.K."/>
            <person name="Cheuk R.F."/>
            <person name="Karlin-Newmann G."/>
            <person name="Liu S.X."/>
            <person name="Lam B."/>
            <person name="Sakano H."/>
            <person name="Wu T."/>
            <person name="Yu G."/>
            <person name="Miranda M."/>
            <person name="Quach H.L."/>
            <person name="Tripp M."/>
            <person name="Chang C.H."/>
            <person name="Lee J.M."/>
            <person name="Toriumi M.J."/>
            <person name="Chan M.M."/>
            <person name="Tang C.C."/>
            <person name="Onodera C.S."/>
            <person name="Deng J.M."/>
            <person name="Akiyama K."/>
            <person name="Ansari Y."/>
            <person name="Arakawa T."/>
            <person name="Banh J."/>
            <person name="Banno F."/>
            <person name="Bowser L."/>
            <person name="Brooks S.Y."/>
            <person name="Carninci P."/>
            <person name="Chao Q."/>
            <person name="Choy N."/>
            <person name="Enju A."/>
            <person name="Goldsmith A.D."/>
            <person name="Gurjal M."/>
            <person name="Hansen N.F."/>
            <person name="Hayashizaki Y."/>
            <person name="Johnson-Hopson C."/>
            <person name="Hsuan V.W."/>
            <person name="Iida K."/>
            <person name="Karnes M."/>
            <person name="Khan S."/>
            <person name="Koesema E."/>
            <person name="Ishida J."/>
            <person name="Jiang P.X."/>
            <person name="Jones T."/>
            <person name="Kawai J."/>
            <person name="Kamiya A."/>
            <person name="Meyers C."/>
            <person name="Nakajima M."/>
            <person name="Narusaka M."/>
            <person name="Seki M."/>
            <person name="Sakurai T."/>
            <person name="Satou M."/>
            <person name="Tamse R."/>
            <person name="Vaysberg M."/>
            <person name="Wallender E.K."/>
            <person name="Wong C."/>
            <person name="Yamamura Y."/>
            <person name="Yuan S."/>
            <person name="Shinozaki K."/>
            <person name="Davis R.W."/>
            <person name="Theologis A."/>
            <person name="Ecker J.R."/>
        </authorList>
    </citation>
    <scope>NUCLEOTIDE SEQUENCE [LARGE SCALE MRNA]</scope>
    <source>
        <strain>cv. Columbia</strain>
    </source>
</reference>
<reference key="4">
    <citation type="journal article" date="2008" name="Plant Cell">
        <title>Characterization of Arabidopsis and rice DWD proteins and their roles as substrate receptors for CUL4-RING E3 ubiquitin ligases.</title>
        <authorList>
            <person name="Lee J.H."/>
            <person name="Terzaghi W."/>
            <person name="Gusmaroli G."/>
            <person name="Charron J.B."/>
            <person name="Yoon H.J."/>
            <person name="Chen H."/>
            <person name="He Y.J."/>
            <person name="Xiong Y."/>
            <person name="Deng X.W."/>
        </authorList>
    </citation>
    <scope>GENE FAMILY</scope>
</reference>
<reference key="5">
    <citation type="journal article" date="2008" name="Plant Cell">
        <title>Arabidopsis DDB1-CUL4 ASSOCIATED FACTOR1 forms a nuclear E3 ubiquitin ligase with DDB1 and CUL4 that is involved in multiple plant developmental processes.</title>
        <authorList>
            <person name="Zhang Y."/>
            <person name="Feng S."/>
            <person name="Chen F."/>
            <person name="Chen H."/>
            <person name="Wang J."/>
            <person name="McCall C."/>
            <person name="Xiong Y."/>
            <person name="Deng X.W."/>
        </authorList>
    </citation>
    <scope>GENE FAMILY</scope>
</reference>
<reference key="6">
    <citation type="journal article" date="2009" name="Plant Physiol.">
        <title>Large-scale Arabidopsis phosphoproteome profiling reveals novel chloroplast kinase substrates and phosphorylation networks.</title>
        <authorList>
            <person name="Reiland S."/>
            <person name="Messerli G."/>
            <person name="Baerenfaller K."/>
            <person name="Gerrits B."/>
            <person name="Endler A."/>
            <person name="Grossmann J."/>
            <person name="Gruissem W."/>
            <person name="Baginsky S."/>
        </authorList>
    </citation>
    <scope>IDENTIFICATION BY MASS SPECTROMETRY [LARGE SCALE ANALYSIS]</scope>
</reference>
<reference key="7">
    <citation type="journal article" date="2014" name="Mol. Cells">
        <title>Characterization of a novel DWD protein that participates in heat stress response in Arabidopsis.</title>
        <authorList>
            <person name="Kim S.-H."/>
            <person name="Lee J.-H."/>
            <person name="Seo K.-I."/>
            <person name="Ryu B."/>
            <person name="Sung Y."/>
            <person name="Chung T."/>
            <person name="Deng X.W."/>
            <person name="Lee J.-H."/>
        </authorList>
    </citation>
    <scope>FUNCTION</scope>
    <scope>DISRUPTION PHENOTYPE</scope>
    <scope>INDUCTION BY HEAT STRESS</scope>
    <scope>INTERACTION WITH HSP90-1; DDB1A AND DDB1B</scope>
    <source>
        <strain>cv. Columbia</strain>
    </source>
</reference>
<gene>
    <name evidence="4" type="primary">HTD1</name>
    <name evidence="7" type="ordered locus">At2g19540</name>
    <name evidence="8" type="ORF">F3P11.14</name>
</gene>